<keyword id="KW-0687">Ribonucleoprotein</keyword>
<keyword id="KW-0689">Ribosomal protein</keyword>
<keyword id="KW-0694">RNA-binding</keyword>
<keyword id="KW-0699">rRNA-binding</keyword>
<evidence type="ECO:0000255" key="1">
    <source>
        <dbReference type="HAMAP-Rule" id="MF_01302"/>
    </source>
</evidence>
<evidence type="ECO:0000305" key="2"/>
<feature type="chain" id="PRO_1000051767" description="Small ribosomal subunit protein uS8">
    <location>
        <begin position="1"/>
        <end position="131"/>
    </location>
</feature>
<sequence length="131" mass="14199">MSMSDPIADMLTRIRNAQMVEKVSVSMPSSKVKVAIAQVLKDEGYIDDFAVKADGAKAELNIALKYYAGRPVIERLERVSKPGLRVYRGRNEIPQVMNGLGVAIVSTPKGVMTDRKARATGVGGEVICYVA</sequence>
<reference key="1">
    <citation type="journal article" date="2010" name="Genome Biol. Evol.">
        <title>Continuing evolution of Burkholderia mallei through genome reduction and large-scale rearrangements.</title>
        <authorList>
            <person name="Losada L."/>
            <person name="Ronning C.M."/>
            <person name="DeShazer D."/>
            <person name="Woods D."/>
            <person name="Fedorova N."/>
            <person name="Kim H.S."/>
            <person name="Shabalina S.A."/>
            <person name="Pearson T.R."/>
            <person name="Brinkac L."/>
            <person name="Tan P."/>
            <person name="Nandi T."/>
            <person name="Crabtree J."/>
            <person name="Badger J."/>
            <person name="Beckstrom-Sternberg S."/>
            <person name="Saqib M."/>
            <person name="Schutzer S.E."/>
            <person name="Keim P."/>
            <person name="Nierman W.C."/>
        </authorList>
    </citation>
    <scope>NUCLEOTIDE SEQUENCE [LARGE SCALE GENOMIC DNA]</scope>
    <source>
        <strain>NCTC 10247</strain>
    </source>
</reference>
<name>RS8_BURM7</name>
<accession>A3MRW8</accession>
<protein>
    <recommendedName>
        <fullName evidence="1">Small ribosomal subunit protein uS8</fullName>
    </recommendedName>
    <alternativeName>
        <fullName evidence="2">30S ribosomal protein S8</fullName>
    </alternativeName>
</protein>
<proteinExistence type="inferred from homology"/>
<gene>
    <name evidence="1" type="primary">rpsH</name>
    <name type="ordered locus">BMA10247_3492</name>
</gene>
<dbReference type="EMBL" id="CP000548">
    <property type="protein sequence ID" value="ABO05206.1"/>
    <property type="molecule type" value="Genomic_DNA"/>
</dbReference>
<dbReference type="RefSeq" id="WP_004185153.1">
    <property type="nucleotide sequence ID" value="NZ_CP007802.1"/>
</dbReference>
<dbReference type="SMR" id="A3MRW8"/>
<dbReference type="GeneID" id="93061818"/>
<dbReference type="KEGG" id="bmaz:BM44_3027"/>
<dbReference type="KEGG" id="bmn:BMA10247_3492"/>
<dbReference type="PATRIC" id="fig|320389.8.peg.3399"/>
<dbReference type="GO" id="GO:1990904">
    <property type="term" value="C:ribonucleoprotein complex"/>
    <property type="evidence" value="ECO:0007669"/>
    <property type="project" value="UniProtKB-KW"/>
</dbReference>
<dbReference type="GO" id="GO:0005840">
    <property type="term" value="C:ribosome"/>
    <property type="evidence" value="ECO:0007669"/>
    <property type="project" value="UniProtKB-KW"/>
</dbReference>
<dbReference type="GO" id="GO:0019843">
    <property type="term" value="F:rRNA binding"/>
    <property type="evidence" value="ECO:0007669"/>
    <property type="project" value="UniProtKB-UniRule"/>
</dbReference>
<dbReference type="GO" id="GO:0003735">
    <property type="term" value="F:structural constituent of ribosome"/>
    <property type="evidence" value="ECO:0007669"/>
    <property type="project" value="InterPro"/>
</dbReference>
<dbReference type="GO" id="GO:0006412">
    <property type="term" value="P:translation"/>
    <property type="evidence" value="ECO:0007669"/>
    <property type="project" value="UniProtKB-UniRule"/>
</dbReference>
<dbReference type="FunFam" id="3.30.1370.30:FF:000003">
    <property type="entry name" value="30S ribosomal protein S8"/>
    <property type="match status" value="1"/>
</dbReference>
<dbReference type="FunFam" id="3.30.1490.10:FF:000001">
    <property type="entry name" value="30S ribosomal protein S8"/>
    <property type="match status" value="1"/>
</dbReference>
<dbReference type="Gene3D" id="3.30.1370.30">
    <property type="match status" value="1"/>
</dbReference>
<dbReference type="Gene3D" id="3.30.1490.10">
    <property type="match status" value="1"/>
</dbReference>
<dbReference type="HAMAP" id="MF_01302_B">
    <property type="entry name" value="Ribosomal_uS8_B"/>
    <property type="match status" value="1"/>
</dbReference>
<dbReference type="InterPro" id="IPR000630">
    <property type="entry name" value="Ribosomal_uS8"/>
</dbReference>
<dbReference type="InterPro" id="IPR047863">
    <property type="entry name" value="Ribosomal_uS8_CS"/>
</dbReference>
<dbReference type="InterPro" id="IPR035987">
    <property type="entry name" value="Ribosomal_uS8_sf"/>
</dbReference>
<dbReference type="NCBIfam" id="NF001109">
    <property type="entry name" value="PRK00136.1"/>
    <property type="match status" value="1"/>
</dbReference>
<dbReference type="PANTHER" id="PTHR11758">
    <property type="entry name" value="40S RIBOSOMAL PROTEIN S15A"/>
    <property type="match status" value="1"/>
</dbReference>
<dbReference type="Pfam" id="PF00410">
    <property type="entry name" value="Ribosomal_S8"/>
    <property type="match status" value="1"/>
</dbReference>
<dbReference type="SUPFAM" id="SSF56047">
    <property type="entry name" value="Ribosomal protein S8"/>
    <property type="match status" value="1"/>
</dbReference>
<dbReference type="PROSITE" id="PS00053">
    <property type="entry name" value="RIBOSOMAL_S8"/>
    <property type="match status" value="1"/>
</dbReference>
<organism>
    <name type="scientific">Burkholderia mallei (strain NCTC 10247)</name>
    <dbReference type="NCBI Taxonomy" id="320389"/>
    <lineage>
        <taxon>Bacteria</taxon>
        <taxon>Pseudomonadati</taxon>
        <taxon>Pseudomonadota</taxon>
        <taxon>Betaproteobacteria</taxon>
        <taxon>Burkholderiales</taxon>
        <taxon>Burkholderiaceae</taxon>
        <taxon>Burkholderia</taxon>
        <taxon>pseudomallei group</taxon>
    </lineage>
</organism>
<comment type="function">
    <text evidence="1">One of the primary rRNA binding proteins, it binds directly to 16S rRNA central domain where it helps coordinate assembly of the platform of the 30S subunit.</text>
</comment>
<comment type="subunit">
    <text evidence="1">Part of the 30S ribosomal subunit. Contacts proteins S5 and S12.</text>
</comment>
<comment type="similarity">
    <text evidence="1">Belongs to the universal ribosomal protein uS8 family.</text>
</comment>